<sequence>MQVIILPSAHDVALYAAARVIDVINTETNPVLGLATGSTPIALYKELVVLYQSKQVSFRHTTSFNLDEYIGIADSHEQSYRTFMNRHLFDAIDIIATNTHVPLAESQDAGTLKNSAQDYEASIQQAGGIDLQILGIGVNGHIGFNEPTSSFASRTRIKTLSESTVVANKRFFKDGEFQPHLALTMGIGTILDSRAVLLMATGKAKAEAVKAMIEGSLSAMCPASALQLHEAATIVLDEEAASLLALKEYYQWCEQKRQQLHEGDVS</sequence>
<dbReference type="EC" id="3.5.99.6" evidence="1"/>
<dbReference type="EMBL" id="CP000749">
    <property type="protein sequence ID" value="ABR70578.1"/>
    <property type="molecule type" value="Genomic_DNA"/>
</dbReference>
<dbReference type="SMR" id="A6VVU9"/>
<dbReference type="STRING" id="400668.Mmwyl1_1652"/>
<dbReference type="KEGG" id="mmw:Mmwyl1_1652"/>
<dbReference type="eggNOG" id="COG0363">
    <property type="taxonomic scope" value="Bacteria"/>
</dbReference>
<dbReference type="HOGENOM" id="CLU_049611_1_1_6"/>
<dbReference type="OrthoDB" id="9791139at2"/>
<dbReference type="UniPathway" id="UPA00629">
    <property type="reaction ID" value="UER00684"/>
</dbReference>
<dbReference type="GO" id="GO:0005737">
    <property type="term" value="C:cytoplasm"/>
    <property type="evidence" value="ECO:0007669"/>
    <property type="project" value="TreeGrafter"/>
</dbReference>
<dbReference type="GO" id="GO:0004342">
    <property type="term" value="F:glucosamine-6-phosphate deaminase activity"/>
    <property type="evidence" value="ECO:0007669"/>
    <property type="project" value="UniProtKB-UniRule"/>
</dbReference>
<dbReference type="GO" id="GO:0042802">
    <property type="term" value="F:identical protein binding"/>
    <property type="evidence" value="ECO:0007669"/>
    <property type="project" value="TreeGrafter"/>
</dbReference>
<dbReference type="GO" id="GO:0005975">
    <property type="term" value="P:carbohydrate metabolic process"/>
    <property type="evidence" value="ECO:0007669"/>
    <property type="project" value="InterPro"/>
</dbReference>
<dbReference type="GO" id="GO:0006043">
    <property type="term" value="P:glucosamine catabolic process"/>
    <property type="evidence" value="ECO:0007669"/>
    <property type="project" value="TreeGrafter"/>
</dbReference>
<dbReference type="GO" id="GO:0006046">
    <property type="term" value="P:N-acetylglucosamine catabolic process"/>
    <property type="evidence" value="ECO:0007669"/>
    <property type="project" value="TreeGrafter"/>
</dbReference>
<dbReference type="GO" id="GO:0019262">
    <property type="term" value="P:N-acetylneuraminate catabolic process"/>
    <property type="evidence" value="ECO:0007669"/>
    <property type="project" value="UniProtKB-UniRule"/>
</dbReference>
<dbReference type="CDD" id="cd01399">
    <property type="entry name" value="GlcN6P_deaminase"/>
    <property type="match status" value="1"/>
</dbReference>
<dbReference type="Gene3D" id="3.40.50.1360">
    <property type="match status" value="1"/>
</dbReference>
<dbReference type="HAMAP" id="MF_01241">
    <property type="entry name" value="GlcN6P_deamin"/>
    <property type="match status" value="1"/>
</dbReference>
<dbReference type="InterPro" id="IPR006148">
    <property type="entry name" value="Glc/Gal-6P_isomerase"/>
</dbReference>
<dbReference type="InterPro" id="IPR004547">
    <property type="entry name" value="Glucosamine6P_isomerase"/>
</dbReference>
<dbReference type="InterPro" id="IPR018321">
    <property type="entry name" value="Glucosamine6P_isomerase_CS"/>
</dbReference>
<dbReference type="InterPro" id="IPR037171">
    <property type="entry name" value="NagB/RpiA_transferase-like"/>
</dbReference>
<dbReference type="NCBIfam" id="TIGR00502">
    <property type="entry name" value="nagB"/>
    <property type="match status" value="1"/>
</dbReference>
<dbReference type="PANTHER" id="PTHR11280">
    <property type="entry name" value="GLUCOSAMINE-6-PHOSPHATE ISOMERASE"/>
    <property type="match status" value="1"/>
</dbReference>
<dbReference type="PANTHER" id="PTHR11280:SF5">
    <property type="entry name" value="GLUCOSAMINE-6-PHOSPHATE ISOMERASE"/>
    <property type="match status" value="1"/>
</dbReference>
<dbReference type="Pfam" id="PF01182">
    <property type="entry name" value="Glucosamine_iso"/>
    <property type="match status" value="1"/>
</dbReference>
<dbReference type="SUPFAM" id="SSF100950">
    <property type="entry name" value="NagB/RpiA/CoA transferase-like"/>
    <property type="match status" value="1"/>
</dbReference>
<dbReference type="PROSITE" id="PS01161">
    <property type="entry name" value="GLC_GALNAC_ISOMERASE"/>
    <property type="match status" value="1"/>
</dbReference>
<proteinExistence type="inferred from homology"/>
<organism>
    <name type="scientific">Marinomonas sp. (strain MWYL1)</name>
    <dbReference type="NCBI Taxonomy" id="400668"/>
    <lineage>
        <taxon>Bacteria</taxon>
        <taxon>Pseudomonadati</taxon>
        <taxon>Pseudomonadota</taxon>
        <taxon>Gammaproteobacteria</taxon>
        <taxon>Oceanospirillales</taxon>
        <taxon>Oceanospirillaceae</taxon>
        <taxon>Marinomonas</taxon>
    </lineage>
</organism>
<name>NAGB_MARMS</name>
<evidence type="ECO:0000255" key="1">
    <source>
        <dbReference type="HAMAP-Rule" id="MF_01241"/>
    </source>
</evidence>
<keyword id="KW-0119">Carbohydrate metabolism</keyword>
<keyword id="KW-0378">Hydrolase</keyword>
<gene>
    <name evidence="1" type="primary">nagB</name>
    <name type="ordered locus">Mmwyl1_1652</name>
</gene>
<comment type="function">
    <text evidence="1">Catalyzes the reversible isomerization-deamination of glucosamine 6-phosphate (GlcN6P) to form fructose 6-phosphate (Fru6P) and ammonium ion.</text>
</comment>
<comment type="catalytic activity">
    <reaction evidence="1">
        <text>alpha-D-glucosamine 6-phosphate + H2O = beta-D-fructose 6-phosphate + NH4(+)</text>
        <dbReference type="Rhea" id="RHEA:12172"/>
        <dbReference type="ChEBI" id="CHEBI:15377"/>
        <dbReference type="ChEBI" id="CHEBI:28938"/>
        <dbReference type="ChEBI" id="CHEBI:57634"/>
        <dbReference type="ChEBI" id="CHEBI:75989"/>
        <dbReference type="EC" id="3.5.99.6"/>
    </reaction>
</comment>
<comment type="pathway">
    <text evidence="1">Amino-sugar metabolism; N-acetylneuraminate degradation; D-fructose 6-phosphate from N-acetylneuraminate: step 5/5.</text>
</comment>
<comment type="subunit">
    <text evidence="1">Homohexamer.</text>
</comment>
<comment type="similarity">
    <text evidence="1">Belongs to the glucosamine/galactosamine-6-phosphate isomerase family. NagB subfamily.</text>
</comment>
<protein>
    <recommendedName>
        <fullName evidence="1">Glucosamine-6-phosphate deaminase</fullName>
        <ecNumber evidence="1">3.5.99.6</ecNumber>
    </recommendedName>
    <alternativeName>
        <fullName evidence="1">GlcN6P deaminase</fullName>
        <shortName evidence="1">GNPDA</shortName>
    </alternativeName>
    <alternativeName>
        <fullName evidence="1">Glucosamine-6-phosphate isomerase</fullName>
    </alternativeName>
</protein>
<accession>A6VVU9</accession>
<reference key="1">
    <citation type="submission" date="2007-06" db="EMBL/GenBank/DDBJ databases">
        <title>Complete sequence of Marinomonas sp. MWYL1.</title>
        <authorList>
            <consortium name="US DOE Joint Genome Institute"/>
            <person name="Copeland A."/>
            <person name="Lucas S."/>
            <person name="Lapidus A."/>
            <person name="Barry K."/>
            <person name="Glavina del Rio T."/>
            <person name="Dalin E."/>
            <person name="Tice H."/>
            <person name="Pitluck S."/>
            <person name="Kiss H."/>
            <person name="Brettin T."/>
            <person name="Bruce D."/>
            <person name="Detter J.C."/>
            <person name="Han C."/>
            <person name="Schmutz J."/>
            <person name="Larimer F."/>
            <person name="Land M."/>
            <person name="Hauser L."/>
            <person name="Kyrpides N."/>
            <person name="Kim E."/>
            <person name="Johnston A.W.B."/>
            <person name="Todd J.D."/>
            <person name="Rogers R."/>
            <person name="Wexler M."/>
            <person name="Bond P.L."/>
            <person name="Li Y."/>
            <person name="Richardson P."/>
        </authorList>
    </citation>
    <scope>NUCLEOTIDE SEQUENCE [LARGE SCALE GENOMIC DNA]</scope>
    <source>
        <strain>MWYL1</strain>
    </source>
</reference>
<feature type="chain" id="PRO_1000085751" description="Glucosamine-6-phosphate deaminase">
    <location>
        <begin position="1"/>
        <end position="266"/>
    </location>
</feature>
<feature type="active site" description="Proton acceptor; for enolization step" evidence="1">
    <location>
        <position position="67"/>
    </location>
</feature>
<feature type="active site" description="For ring-opening step" evidence="1">
    <location>
        <position position="139"/>
    </location>
</feature>
<feature type="active site" description="Proton acceptor; for ring-opening step" evidence="1">
    <location>
        <position position="141"/>
    </location>
</feature>
<feature type="active site" description="For ring-opening step" evidence="1">
    <location>
        <position position="146"/>
    </location>
</feature>